<reference key="1">
    <citation type="journal article" date="2007" name="Proc. Natl. Acad. Sci. U.S.A.">
        <title>The genome of Syntrophus aciditrophicus: life at the thermodynamic limit of microbial growth.</title>
        <authorList>
            <person name="McInerney M.J."/>
            <person name="Rohlin L."/>
            <person name="Mouttaki H."/>
            <person name="Kim U."/>
            <person name="Krupp R.S."/>
            <person name="Rios-Hernandez L."/>
            <person name="Sieber J."/>
            <person name="Struchtemeyer C.G."/>
            <person name="Bhattacharyya A."/>
            <person name="Campbell J.W."/>
            <person name="Gunsalus R.P."/>
        </authorList>
    </citation>
    <scope>NUCLEOTIDE SEQUENCE [LARGE SCALE GENOMIC DNA]</scope>
    <source>
        <strain>SB</strain>
    </source>
</reference>
<dbReference type="EC" id="3.1.-.-" evidence="1"/>
<dbReference type="EMBL" id="CP000252">
    <property type="protein sequence ID" value="ABC77421.1"/>
    <property type="molecule type" value="Genomic_DNA"/>
</dbReference>
<dbReference type="SMR" id="Q2LTL4"/>
<dbReference type="FunCoup" id="Q2LTL4">
    <property type="interactions" value="249"/>
</dbReference>
<dbReference type="STRING" id="56780.SYN_02792"/>
<dbReference type="KEGG" id="sat:SYN_02792"/>
<dbReference type="eggNOG" id="COG0319">
    <property type="taxonomic scope" value="Bacteria"/>
</dbReference>
<dbReference type="HOGENOM" id="CLU_106710_3_3_7"/>
<dbReference type="InParanoid" id="Q2LTL4"/>
<dbReference type="Proteomes" id="UP000001933">
    <property type="component" value="Chromosome"/>
</dbReference>
<dbReference type="GO" id="GO:0005737">
    <property type="term" value="C:cytoplasm"/>
    <property type="evidence" value="ECO:0007669"/>
    <property type="project" value="UniProtKB-SubCell"/>
</dbReference>
<dbReference type="GO" id="GO:0004222">
    <property type="term" value="F:metalloendopeptidase activity"/>
    <property type="evidence" value="ECO:0007669"/>
    <property type="project" value="InterPro"/>
</dbReference>
<dbReference type="GO" id="GO:0004521">
    <property type="term" value="F:RNA endonuclease activity"/>
    <property type="evidence" value="ECO:0007669"/>
    <property type="project" value="UniProtKB-UniRule"/>
</dbReference>
<dbReference type="GO" id="GO:0008270">
    <property type="term" value="F:zinc ion binding"/>
    <property type="evidence" value="ECO:0007669"/>
    <property type="project" value="UniProtKB-UniRule"/>
</dbReference>
<dbReference type="GO" id="GO:0006364">
    <property type="term" value="P:rRNA processing"/>
    <property type="evidence" value="ECO:0007669"/>
    <property type="project" value="UniProtKB-UniRule"/>
</dbReference>
<dbReference type="Gene3D" id="3.40.390.30">
    <property type="entry name" value="Metalloproteases ('zincins'), catalytic domain"/>
    <property type="match status" value="1"/>
</dbReference>
<dbReference type="HAMAP" id="MF_00009">
    <property type="entry name" value="Endoribonucl_YbeY"/>
    <property type="match status" value="1"/>
</dbReference>
<dbReference type="InterPro" id="IPR023091">
    <property type="entry name" value="MetalPrtase_cat_dom_sf_prd"/>
</dbReference>
<dbReference type="InterPro" id="IPR002036">
    <property type="entry name" value="YbeY"/>
</dbReference>
<dbReference type="InterPro" id="IPR020549">
    <property type="entry name" value="YbeY_CS"/>
</dbReference>
<dbReference type="NCBIfam" id="TIGR00043">
    <property type="entry name" value="rRNA maturation RNase YbeY"/>
    <property type="match status" value="1"/>
</dbReference>
<dbReference type="PANTHER" id="PTHR46986">
    <property type="entry name" value="ENDORIBONUCLEASE YBEY, CHLOROPLASTIC"/>
    <property type="match status" value="1"/>
</dbReference>
<dbReference type="PANTHER" id="PTHR46986:SF1">
    <property type="entry name" value="ENDORIBONUCLEASE YBEY, CHLOROPLASTIC"/>
    <property type="match status" value="1"/>
</dbReference>
<dbReference type="Pfam" id="PF02130">
    <property type="entry name" value="YbeY"/>
    <property type="match status" value="1"/>
</dbReference>
<dbReference type="SUPFAM" id="SSF55486">
    <property type="entry name" value="Metalloproteases ('zincins'), catalytic domain"/>
    <property type="match status" value="1"/>
</dbReference>
<dbReference type="PROSITE" id="PS01306">
    <property type="entry name" value="UPF0054"/>
    <property type="match status" value="1"/>
</dbReference>
<sequence length="160" mass="18650">MKRAFERMSMAIAIRNQQKKVKIDLRQIRRRVQKLLRLVDCREKEISLLFVDDEEIQEINQRYLGRNYPTNVISFSLSEGEFSSVNPDVLGDIVISVDTASRDAERGNIPVSDELDFLIIHGLLHILGYNHENNNPEETACMQKKEQELFFLLHGYPLDF</sequence>
<protein>
    <recommendedName>
        <fullName evidence="1">Endoribonuclease YbeY</fullName>
        <ecNumber evidence="1">3.1.-.-</ecNumber>
    </recommendedName>
</protein>
<evidence type="ECO:0000255" key="1">
    <source>
        <dbReference type="HAMAP-Rule" id="MF_00009"/>
    </source>
</evidence>
<organism>
    <name type="scientific">Syntrophus aciditrophicus (strain SB)</name>
    <dbReference type="NCBI Taxonomy" id="56780"/>
    <lineage>
        <taxon>Bacteria</taxon>
        <taxon>Pseudomonadati</taxon>
        <taxon>Thermodesulfobacteriota</taxon>
        <taxon>Syntrophia</taxon>
        <taxon>Syntrophales</taxon>
        <taxon>Syntrophaceae</taxon>
        <taxon>Syntrophus</taxon>
    </lineage>
</organism>
<comment type="function">
    <text evidence="1">Single strand-specific metallo-endoribonuclease involved in late-stage 70S ribosome quality control and in maturation of the 3' terminus of the 16S rRNA.</text>
</comment>
<comment type="cofactor">
    <cofactor evidence="1">
        <name>Zn(2+)</name>
        <dbReference type="ChEBI" id="CHEBI:29105"/>
    </cofactor>
    <text evidence="1">Binds 1 zinc ion.</text>
</comment>
<comment type="subcellular location">
    <subcellularLocation>
        <location evidence="1">Cytoplasm</location>
    </subcellularLocation>
</comment>
<comment type="similarity">
    <text evidence="1">Belongs to the endoribonuclease YbeY family.</text>
</comment>
<keyword id="KW-0963">Cytoplasm</keyword>
<keyword id="KW-0255">Endonuclease</keyword>
<keyword id="KW-0378">Hydrolase</keyword>
<keyword id="KW-0479">Metal-binding</keyword>
<keyword id="KW-0540">Nuclease</keyword>
<keyword id="KW-1185">Reference proteome</keyword>
<keyword id="KW-0690">Ribosome biogenesis</keyword>
<keyword id="KW-0698">rRNA processing</keyword>
<keyword id="KW-0862">Zinc</keyword>
<accession>Q2LTL4</accession>
<gene>
    <name evidence="1" type="primary">ybeY</name>
    <name type="ordered locus">SYNAS_15420</name>
    <name type="ORF">SYN_02792</name>
</gene>
<name>YBEY_SYNAS</name>
<feature type="chain" id="PRO_0000284340" description="Endoribonuclease YbeY">
    <location>
        <begin position="1"/>
        <end position="160"/>
    </location>
</feature>
<feature type="binding site" evidence="1">
    <location>
        <position position="121"/>
    </location>
    <ligand>
        <name>Zn(2+)</name>
        <dbReference type="ChEBI" id="CHEBI:29105"/>
        <note>catalytic</note>
    </ligand>
</feature>
<feature type="binding site" evidence="1">
    <location>
        <position position="125"/>
    </location>
    <ligand>
        <name>Zn(2+)</name>
        <dbReference type="ChEBI" id="CHEBI:29105"/>
        <note>catalytic</note>
    </ligand>
</feature>
<feature type="binding site" evidence="1">
    <location>
        <position position="131"/>
    </location>
    <ligand>
        <name>Zn(2+)</name>
        <dbReference type="ChEBI" id="CHEBI:29105"/>
        <note>catalytic</note>
    </ligand>
</feature>
<proteinExistence type="inferred from homology"/>